<reference key="1">
    <citation type="submission" date="2009-07" db="EMBL/GenBank/DDBJ databases">
        <title>Complete sequence of Geobacter sp. M21.</title>
        <authorList>
            <consortium name="US DOE Joint Genome Institute"/>
            <person name="Lucas S."/>
            <person name="Copeland A."/>
            <person name="Lapidus A."/>
            <person name="Glavina del Rio T."/>
            <person name="Dalin E."/>
            <person name="Tice H."/>
            <person name="Bruce D."/>
            <person name="Goodwin L."/>
            <person name="Pitluck S."/>
            <person name="Saunders E."/>
            <person name="Brettin T."/>
            <person name="Detter J.C."/>
            <person name="Han C."/>
            <person name="Larimer F."/>
            <person name="Land M."/>
            <person name="Hauser L."/>
            <person name="Kyrpides N."/>
            <person name="Ovchinnikova G."/>
            <person name="Lovley D."/>
        </authorList>
    </citation>
    <scope>NUCLEOTIDE SEQUENCE [LARGE SCALE GENOMIC DNA]</scope>
    <source>
        <strain>M21</strain>
    </source>
</reference>
<keyword id="KW-0479">Metal-binding</keyword>
<keyword id="KW-0687">Ribonucleoprotein</keyword>
<keyword id="KW-0689">Ribosomal protein</keyword>
<keyword id="KW-0694">RNA-binding</keyword>
<keyword id="KW-0699">rRNA-binding</keyword>
<keyword id="KW-0862">Zinc</keyword>
<evidence type="ECO:0000255" key="1">
    <source>
        <dbReference type="HAMAP-Rule" id="MF_00501"/>
    </source>
</evidence>
<evidence type="ECO:0000305" key="2"/>
<protein>
    <recommendedName>
        <fullName evidence="1">Large ribosomal subunit protein bL31</fullName>
    </recommendedName>
    <alternativeName>
        <fullName evidence="2">50S ribosomal protein L31</fullName>
    </alternativeName>
</protein>
<feature type="chain" id="PRO_1000206523" description="Large ribosomal subunit protein bL31">
    <location>
        <begin position="1"/>
        <end position="72"/>
    </location>
</feature>
<feature type="binding site" evidence="1">
    <location>
        <position position="16"/>
    </location>
    <ligand>
        <name>Zn(2+)</name>
        <dbReference type="ChEBI" id="CHEBI:29105"/>
    </ligand>
</feature>
<feature type="binding site" evidence="1">
    <location>
        <position position="18"/>
    </location>
    <ligand>
        <name>Zn(2+)</name>
        <dbReference type="ChEBI" id="CHEBI:29105"/>
    </ligand>
</feature>
<feature type="binding site" evidence="1">
    <location>
        <position position="36"/>
    </location>
    <ligand>
        <name>Zn(2+)</name>
        <dbReference type="ChEBI" id="CHEBI:29105"/>
    </ligand>
</feature>
<feature type="binding site" evidence="1">
    <location>
        <position position="39"/>
    </location>
    <ligand>
        <name>Zn(2+)</name>
        <dbReference type="ChEBI" id="CHEBI:29105"/>
    </ligand>
</feature>
<organism>
    <name type="scientific">Geobacter sp. (strain M21)</name>
    <dbReference type="NCBI Taxonomy" id="443144"/>
    <lineage>
        <taxon>Bacteria</taxon>
        <taxon>Pseudomonadati</taxon>
        <taxon>Thermodesulfobacteriota</taxon>
        <taxon>Desulfuromonadia</taxon>
        <taxon>Geobacterales</taxon>
        <taxon>Geobacteraceae</taxon>
        <taxon>Geobacter</taxon>
    </lineage>
</organism>
<name>RL31_GEOSM</name>
<dbReference type="EMBL" id="CP001661">
    <property type="protein sequence ID" value="ACT19826.1"/>
    <property type="molecule type" value="Genomic_DNA"/>
</dbReference>
<dbReference type="SMR" id="C6E7G6"/>
<dbReference type="STRING" id="443144.GM21_3807"/>
<dbReference type="KEGG" id="gem:GM21_3807"/>
<dbReference type="eggNOG" id="COG0254">
    <property type="taxonomic scope" value="Bacteria"/>
</dbReference>
<dbReference type="HOGENOM" id="CLU_114306_4_3_7"/>
<dbReference type="OrthoDB" id="9803251at2"/>
<dbReference type="GO" id="GO:1990904">
    <property type="term" value="C:ribonucleoprotein complex"/>
    <property type="evidence" value="ECO:0007669"/>
    <property type="project" value="UniProtKB-KW"/>
</dbReference>
<dbReference type="GO" id="GO:0005840">
    <property type="term" value="C:ribosome"/>
    <property type="evidence" value="ECO:0007669"/>
    <property type="project" value="UniProtKB-KW"/>
</dbReference>
<dbReference type="GO" id="GO:0046872">
    <property type="term" value="F:metal ion binding"/>
    <property type="evidence" value="ECO:0007669"/>
    <property type="project" value="UniProtKB-KW"/>
</dbReference>
<dbReference type="GO" id="GO:0019843">
    <property type="term" value="F:rRNA binding"/>
    <property type="evidence" value="ECO:0007669"/>
    <property type="project" value="UniProtKB-KW"/>
</dbReference>
<dbReference type="GO" id="GO:0003735">
    <property type="term" value="F:structural constituent of ribosome"/>
    <property type="evidence" value="ECO:0007669"/>
    <property type="project" value="InterPro"/>
</dbReference>
<dbReference type="GO" id="GO:0006412">
    <property type="term" value="P:translation"/>
    <property type="evidence" value="ECO:0007669"/>
    <property type="project" value="UniProtKB-UniRule"/>
</dbReference>
<dbReference type="Gene3D" id="4.10.830.30">
    <property type="entry name" value="Ribosomal protein L31"/>
    <property type="match status" value="1"/>
</dbReference>
<dbReference type="HAMAP" id="MF_00501">
    <property type="entry name" value="Ribosomal_bL31_1"/>
    <property type="match status" value="1"/>
</dbReference>
<dbReference type="InterPro" id="IPR034704">
    <property type="entry name" value="Ribosomal_bL28/bL31-like_sf"/>
</dbReference>
<dbReference type="InterPro" id="IPR002150">
    <property type="entry name" value="Ribosomal_bL31"/>
</dbReference>
<dbReference type="InterPro" id="IPR027491">
    <property type="entry name" value="Ribosomal_bL31_A"/>
</dbReference>
<dbReference type="InterPro" id="IPR042105">
    <property type="entry name" value="Ribosomal_bL31_sf"/>
</dbReference>
<dbReference type="NCBIfam" id="TIGR00105">
    <property type="entry name" value="L31"/>
    <property type="match status" value="1"/>
</dbReference>
<dbReference type="NCBIfam" id="NF000612">
    <property type="entry name" value="PRK00019.1"/>
    <property type="match status" value="1"/>
</dbReference>
<dbReference type="NCBIfam" id="NF001809">
    <property type="entry name" value="PRK00528.1"/>
    <property type="match status" value="1"/>
</dbReference>
<dbReference type="PANTHER" id="PTHR33280">
    <property type="entry name" value="50S RIBOSOMAL PROTEIN L31, CHLOROPLASTIC"/>
    <property type="match status" value="1"/>
</dbReference>
<dbReference type="PANTHER" id="PTHR33280:SF6">
    <property type="entry name" value="LARGE RIBOSOMAL SUBUNIT PROTEIN BL31A"/>
    <property type="match status" value="1"/>
</dbReference>
<dbReference type="Pfam" id="PF01197">
    <property type="entry name" value="Ribosomal_L31"/>
    <property type="match status" value="1"/>
</dbReference>
<dbReference type="PRINTS" id="PR01249">
    <property type="entry name" value="RIBOSOMALL31"/>
</dbReference>
<dbReference type="SUPFAM" id="SSF143800">
    <property type="entry name" value="L28p-like"/>
    <property type="match status" value="1"/>
</dbReference>
<dbReference type="PROSITE" id="PS01143">
    <property type="entry name" value="RIBOSOMAL_L31"/>
    <property type="match status" value="1"/>
</dbReference>
<accession>C6E7G6</accession>
<comment type="function">
    <text evidence="1">Binds the 23S rRNA.</text>
</comment>
<comment type="cofactor">
    <cofactor evidence="1">
        <name>Zn(2+)</name>
        <dbReference type="ChEBI" id="CHEBI:29105"/>
    </cofactor>
    <text evidence="1">Binds 1 zinc ion per subunit.</text>
</comment>
<comment type="subunit">
    <text evidence="1">Part of the 50S ribosomal subunit.</text>
</comment>
<comment type="similarity">
    <text evidence="1">Belongs to the bacterial ribosomal protein bL31 family. Type A subfamily.</text>
</comment>
<gene>
    <name evidence="1" type="primary">rpmE</name>
    <name type="ordered locus">GM21_3807</name>
</gene>
<proteinExistence type="inferred from homology"/>
<sequence>MKEGIHPKYNEIIVKCLCGNSFESRSTKAEISTEVCSQCHPFYTGKQKLMDTAGRVERFRKRYNIAAAPEES</sequence>